<evidence type="ECO:0000255" key="1">
    <source>
        <dbReference type="HAMAP-Rule" id="MF_01369"/>
    </source>
</evidence>
<evidence type="ECO:0000305" key="2"/>
<organism>
    <name type="scientific">Sinorhizobium medicae (strain WSM419)</name>
    <name type="common">Ensifer medicae</name>
    <dbReference type="NCBI Taxonomy" id="366394"/>
    <lineage>
        <taxon>Bacteria</taxon>
        <taxon>Pseudomonadati</taxon>
        <taxon>Pseudomonadota</taxon>
        <taxon>Alphaproteobacteria</taxon>
        <taxon>Hyphomicrobiales</taxon>
        <taxon>Rhizobiaceae</taxon>
        <taxon>Sinorhizobium/Ensifer group</taxon>
        <taxon>Sinorhizobium</taxon>
    </lineage>
</organism>
<comment type="function">
    <text evidence="1">One of the early assembly proteins it binds 23S rRNA. One of the proteins that surrounds the polypeptide exit tunnel on the outside of the ribosome. Forms the main docking site for trigger factor binding to the ribosome.</text>
</comment>
<comment type="subunit">
    <text evidence="1">Part of the 50S ribosomal subunit. Contacts protein L29, and trigger factor when it is bound to the ribosome.</text>
</comment>
<comment type="similarity">
    <text evidence="1">Belongs to the universal ribosomal protein uL23 family.</text>
</comment>
<dbReference type="EMBL" id="CP000738">
    <property type="protein sequence ID" value="ABR59841.1"/>
    <property type="molecule type" value="Genomic_DNA"/>
</dbReference>
<dbReference type="RefSeq" id="WP_003536621.1">
    <property type="nucleotide sequence ID" value="NC_009636.1"/>
</dbReference>
<dbReference type="RefSeq" id="YP_001326676.1">
    <property type="nucleotide sequence ID" value="NC_009636.1"/>
</dbReference>
<dbReference type="SMR" id="A6U861"/>
<dbReference type="STRING" id="366394.Smed_0988"/>
<dbReference type="KEGG" id="smd:Smed_0988"/>
<dbReference type="PATRIC" id="fig|366394.8.peg.4109"/>
<dbReference type="eggNOG" id="COG0089">
    <property type="taxonomic scope" value="Bacteria"/>
</dbReference>
<dbReference type="HOGENOM" id="CLU_037562_3_1_5"/>
<dbReference type="OrthoDB" id="9793353at2"/>
<dbReference type="Proteomes" id="UP000001108">
    <property type="component" value="Chromosome"/>
</dbReference>
<dbReference type="GO" id="GO:1990904">
    <property type="term" value="C:ribonucleoprotein complex"/>
    <property type="evidence" value="ECO:0007669"/>
    <property type="project" value="UniProtKB-KW"/>
</dbReference>
<dbReference type="GO" id="GO:0005840">
    <property type="term" value="C:ribosome"/>
    <property type="evidence" value="ECO:0007669"/>
    <property type="project" value="UniProtKB-KW"/>
</dbReference>
<dbReference type="GO" id="GO:0019843">
    <property type="term" value="F:rRNA binding"/>
    <property type="evidence" value="ECO:0007669"/>
    <property type="project" value="UniProtKB-UniRule"/>
</dbReference>
<dbReference type="GO" id="GO:0003735">
    <property type="term" value="F:structural constituent of ribosome"/>
    <property type="evidence" value="ECO:0007669"/>
    <property type="project" value="InterPro"/>
</dbReference>
<dbReference type="GO" id="GO:0006412">
    <property type="term" value="P:translation"/>
    <property type="evidence" value="ECO:0007669"/>
    <property type="project" value="UniProtKB-UniRule"/>
</dbReference>
<dbReference type="FunFam" id="3.30.70.330:FF:000001">
    <property type="entry name" value="50S ribosomal protein L23"/>
    <property type="match status" value="1"/>
</dbReference>
<dbReference type="Gene3D" id="3.30.70.330">
    <property type="match status" value="1"/>
</dbReference>
<dbReference type="HAMAP" id="MF_01369_B">
    <property type="entry name" value="Ribosomal_uL23_B"/>
    <property type="match status" value="1"/>
</dbReference>
<dbReference type="InterPro" id="IPR012677">
    <property type="entry name" value="Nucleotide-bd_a/b_plait_sf"/>
</dbReference>
<dbReference type="InterPro" id="IPR013025">
    <property type="entry name" value="Ribosomal_uL23-like"/>
</dbReference>
<dbReference type="InterPro" id="IPR012678">
    <property type="entry name" value="Ribosomal_uL23/eL15/eS24_sf"/>
</dbReference>
<dbReference type="NCBIfam" id="NF004359">
    <property type="entry name" value="PRK05738.1-3"/>
    <property type="match status" value="1"/>
</dbReference>
<dbReference type="NCBIfam" id="NF004360">
    <property type="entry name" value="PRK05738.1-5"/>
    <property type="match status" value="1"/>
</dbReference>
<dbReference type="NCBIfam" id="NF004363">
    <property type="entry name" value="PRK05738.2-4"/>
    <property type="match status" value="1"/>
</dbReference>
<dbReference type="PANTHER" id="PTHR11620">
    <property type="entry name" value="60S RIBOSOMAL PROTEIN L23A"/>
    <property type="match status" value="1"/>
</dbReference>
<dbReference type="Pfam" id="PF00276">
    <property type="entry name" value="Ribosomal_L23"/>
    <property type="match status" value="1"/>
</dbReference>
<dbReference type="SUPFAM" id="SSF54189">
    <property type="entry name" value="Ribosomal proteins S24e, L23 and L15e"/>
    <property type="match status" value="1"/>
</dbReference>
<reference key="1">
    <citation type="submission" date="2007-06" db="EMBL/GenBank/DDBJ databases">
        <title>Complete sequence of Sinorhizobium medicae WSM419 chromosome.</title>
        <authorList>
            <consortium name="US DOE Joint Genome Institute"/>
            <person name="Copeland A."/>
            <person name="Lucas S."/>
            <person name="Lapidus A."/>
            <person name="Barry K."/>
            <person name="Glavina del Rio T."/>
            <person name="Dalin E."/>
            <person name="Tice H."/>
            <person name="Pitluck S."/>
            <person name="Chain P."/>
            <person name="Malfatti S."/>
            <person name="Shin M."/>
            <person name="Vergez L."/>
            <person name="Schmutz J."/>
            <person name="Larimer F."/>
            <person name="Land M."/>
            <person name="Hauser L."/>
            <person name="Kyrpides N."/>
            <person name="Mikhailova N."/>
            <person name="Reeve W.G."/>
            <person name="Richardson P."/>
        </authorList>
    </citation>
    <scope>NUCLEOTIDE SEQUENCE [LARGE SCALE GENOMIC DNA]</scope>
    <source>
        <strain>WSM419</strain>
    </source>
</reference>
<keyword id="KW-0687">Ribonucleoprotein</keyword>
<keyword id="KW-0689">Ribosomal protein</keyword>
<keyword id="KW-0694">RNA-binding</keyword>
<keyword id="KW-0699">rRNA-binding</keyword>
<gene>
    <name evidence="1" type="primary">rplW</name>
    <name type="ordered locus">Smed_0988</name>
</gene>
<feature type="chain" id="PRO_1000068157" description="Large ribosomal subunit protein uL23">
    <location>
        <begin position="1"/>
        <end position="97"/>
    </location>
</feature>
<protein>
    <recommendedName>
        <fullName evidence="1">Large ribosomal subunit protein uL23</fullName>
    </recommendedName>
    <alternativeName>
        <fullName evidence="2">50S ribosomal protein L23</fullName>
    </alternativeName>
</protein>
<sequence length="97" mass="10444">MTDLRHYDVIVSPSITEKSTLVSEQNQVVFNVAKGASKPEIKAAVEALFGVKVTAVNTLVRKGKLKRFRGFAGKQKDVKKAIVTLADGQSIDVSTGL</sequence>
<accession>A6U861</accession>
<proteinExistence type="inferred from homology"/>
<name>RL23_SINMW</name>